<protein>
    <recommendedName>
        <fullName evidence="1">Nucleoid occlusion protein</fullName>
        <shortName evidence="1">Noc</shortName>
    </recommendedName>
</protein>
<comment type="function">
    <text evidence="1">Effects nucleoid occlusion by binding relatively nonspecifically to DNA and preventing the assembly of the division machinery in the vicinity of the nucleoid, especially under conditions that disturb the cell cycle. It helps to coordinate cell division and chromosome segregation by preventing the formation of the Z ring through the nucleoid, which would cause chromosome breakage.</text>
</comment>
<comment type="subcellular location">
    <subcellularLocation>
        <location evidence="1">Cytoplasm</location>
        <location evidence="1">Nucleoid</location>
    </subcellularLocation>
</comment>
<comment type="similarity">
    <text evidence="1">Belongs to the ParB family.</text>
</comment>
<proteinExistence type="inferred from homology"/>
<organism>
    <name type="scientific">Geobacillus sp. (strain WCH70)</name>
    <dbReference type="NCBI Taxonomy" id="471223"/>
    <lineage>
        <taxon>Bacteria</taxon>
        <taxon>Bacillati</taxon>
        <taxon>Bacillota</taxon>
        <taxon>Bacilli</taxon>
        <taxon>Bacillales</taxon>
        <taxon>Anoxybacillaceae</taxon>
        <taxon>Geobacillus</taxon>
    </lineage>
</organism>
<sequence length="281" mass="32620">MKHPFSRFFSFGEKEQEETMEKQEKEEVRKIPVSKIVPNRFQPRTIFDEEKIEELALTIHTHGIIQPIVVRECEDGKFEIIAGERRWRAVQKLGWSEIPAIIKNLNDKETASVALIENLQREELTPIEEAMAYAKLLELHNLTQEALAQRLGKGQSTIANKLRLLKLPQEVQEALLHRTITERHARALIVLKDKEKQLKLLQEIIDKQLNVKQTEDRVLKMLEAANPKPKPKRKAFSKDMRIAVNTIRQSLTMVANSGVAVDSEEEEFEDYYQITIRIPKK</sequence>
<dbReference type="EMBL" id="CP001638">
    <property type="protein sequence ID" value="ACS26062.1"/>
    <property type="molecule type" value="Genomic_DNA"/>
</dbReference>
<dbReference type="SMR" id="C5D9Y4"/>
<dbReference type="STRING" id="471223.GWCH70_3426"/>
<dbReference type="KEGG" id="gwc:GWCH70_3426"/>
<dbReference type="eggNOG" id="COG1475">
    <property type="taxonomic scope" value="Bacteria"/>
</dbReference>
<dbReference type="HOGENOM" id="CLU_023853_0_1_9"/>
<dbReference type="OrthoDB" id="9802051at2"/>
<dbReference type="GO" id="GO:0005694">
    <property type="term" value="C:chromosome"/>
    <property type="evidence" value="ECO:0007669"/>
    <property type="project" value="TreeGrafter"/>
</dbReference>
<dbReference type="GO" id="GO:0005737">
    <property type="term" value="C:cytoplasm"/>
    <property type="evidence" value="ECO:0007669"/>
    <property type="project" value="UniProtKB-UniRule"/>
</dbReference>
<dbReference type="GO" id="GO:0009295">
    <property type="term" value="C:nucleoid"/>
    <property type="evidence" value="ECO:0007669"/>
    <property type="project" value="UniProtKB-SubCell"/>
</dbReference>
<dbReference type="GO" id="GO:0003677">
    <property type="term" value="F:DNA binding"/>
    <property type="evidence" value="ECO:0007669"/>
    <property type="project" value="UniProtKB-UniRule"/>
</dbReference>
<dbReference type="GO" id="GO:0007059">
    <property type="term" value="P:chromosome segregation"/>
    <property type="evidence" value="ECO:0007669"/>
    <property type="project" value="TreeGrafter"/>
</dbReference>
<dbReference type="GO" id="GO:0000917">
    <property type="term" value="P:division septum assembly"/>
    <property type="evidence" value="ECO:0007669"/>
    <property type="project" value="UniProtKB-KW"/>
</dbReference>
<dbReference type="GO" id="GO:0045881">
    <property type="term" value="P:positive regulation of sporulation resulting in formation of a cellular spore"/>
    <property type="evidence" value="ECO:0007669"/>
    <property type="project" value="TreeGrafter"/>
</dbReference>
<dbReference type="CDD" id="cd16393">
    <property type="entry name" value="SPO0J_N"/>
    <property type="match status" value="1"/>
</dbReference>
<dbReference type="FunFam" id="1.10.10.2830:FF:000001">
    <property type="entry name" value="Chromosome partitioning protein ParB"/>
    <property type="match status" value="1"/>
</dbReference>
<dbReference type="FunFam" id="3.90.1530.30:FF:000001">
    <property type="entry name" value="Chromosome partitioning protein ParB"/>
    <property type="match status" value="1"/>
</dbReference>
<dbReference type="Gene3D" id="1.10.10.2830">
    <property type="match status" value="1"/>
</dbReference>
<dbReference type="Gene3D" id="3.90.1530.30">
    <property type="match status" value="1"/>
</dbReference>
<dbReference type="HAMAP" id="MF_02015">
    <property type="entry name" value="ParB_Noc"/>
    <property type="match status" value="1"/>
</dbReference>
<dbReference type="InterPro" id="IPR050336">
    <property type="entry name" value="Chromosome_partition/occlusion"/>
</dbReference>
<dbReference type="InterPro" id="IPR001387">
    <property type="entry name" value="Cro/C1-type_HTH"/>
</dbReference>
<dbReference type="InterPro" id="IPR041468">
    <property type="entry name" value="HTH_ParB/Spo0J"/>
</dbReference>
<dbReference type="InterPro" id="IPR023705">
    <property type="entry name" value="Nucleoid_occlusion_protein"/>
</dbReference>
<dbReference type="InterPro" id="IPR004437">
    <property type="entry name" value="ParB/RepB/Spo0J"/>
</dbReference>
<dbReference type="InterPro" id="IPR003115">
    <property type="entry name" value="ParB/Sulfiredoxin_dom"/>
</dbReference>
<dbReference type="InterPro" id="IPR036086">
    <property type="entry name" value="ParB/Sulfiredoxin_sf"/>
</dbReference>
<dbReference type="NCBIfam" id="TIGR04285">
    <property type="entry name" value="nucleoid_noc"/>
    <property type="match status" value="1"/>
</dbReference>
<dbReference type="NCBIfam" id="TIGR00180">
    <property type="entry name" value="parB_part"/>
    <property type="match status" value="1"/>
</dbReference>
<dbReference type="PANTHER" id="PTHR33375">
    <property type="entry name" value="CHROMOSOME-PARTITIONING PROTEIN PARB-RELATED"/>
    <property type="match status" value="1"/>
</dbReference>
<dbReference type="PANTHER" id="PTHR33375:SF8">
    <property type="entry name" value="NUCLEOID OCCLUSION PROTEIN"/>
    <property type="match status" value="1"/>
</dbReference>
<dbReference type="Pfam" id="PF17762">
    <property type="entry name" value="HTH_ParB"/>
    <property type="match status" value="1"/>
</dbReference>
<dbReference type="Pfam" id="PF02195">
    <property type="entry name" value="ParBc"/>
    <property type="match status" value="1"/>
</dbReference>
<dbReference type="SMART" id="SM00470">
    <property type="entry name" value="ParB"/>
    <property type="match status" value="1"/>
</dbReference>
<dbReference type="SUPFAM" id="SSF109709">
    <property type="entry name" value="KorB DNA-binding domain-like"/>
    <property type="match status" value="1"/>
</dbReference>
<dbReference type="SUPFAM" id="SSF110849">
    <property type="entry name" value="ParB/Sulfiredoxin"/>
    <property type="match status" value="1"/>
</dbReference>
<feature type="chain" id="PRO_1000216415" description="Nucleoid occlusion protein">
    <location>
        <begin position="1"/>
        <end position="281"/>
    </location>
</feature>
<feature type="DNA-binding region" description="H-T-H motif" evidence="1">
    <location>
        <begin position="145"/>
        <end position="164"/>
    </location>
</feature>
<name>NOC_GEOSW</name>
<keyword id="KW-0131">Cell cycle</keyword>
<keyword id="KW-0132">Cell division</keyword>
<keyword id="KW-0963">Cytoplasm</keyword>
<keyword id="KW-0238">DNA-binding</keyword>
<keyword id="KW-0717">Septation</keyword>
<evidence type="ECO:0000255" key="1">
    <source>
        <dbReference type="HAMAP-Rule" id="MF_02015"/>
    </source>
</evidence>
<gene>
    <name evidence="1" type="primary">noc</name>
    <name type="ordered locus">GWCH70_3426</name>
</gene>
<accession>C5D9Y4</accession>
<reference key="1">
    <citation type="submission" date="2009-06" db="EMBL/GenBank/DDBJ databases">
        <title>Complete sequence of chromosome of Geopacillus sp. WCH70.</title>
        <authorList>
            <consortium name="US DOE Joint Genome Institute"/>
            <person name="Lucas S."/>
            <person name="Copeland A."/>
            <person name="Lapidus A."/>
            <person name="Glavina del Rio T."/>
            <person name="Dalin E."/>
            <person name="Tice H."/>
            <person name="Bruce D."/>
            <person name="Goodwin L."/>
            <person name="Pitluck S."/>
            <person name="Chertkov O."/>
            <person name="Brettin T."/>
            <person name="Detter J.C."/>
            <person name="Han C."/>
            <person name="Larimer F."/>
            <person name="Land M."/>
            <person name="Hauser L."/>
            <person name="Kyrpides N."/>
            <person name="Mikhailova N."/>
            <person name="Brumm P."/>
            <person name="Mead D.A."/>
            <person name="Richardson P."/>
        </authorList>
    </citation>
    <scope>NUCLEOTIDE SEQUENCE [LARGE SCALE GENOMIC DNA]</scope>
    <source>
        <strain>WCH70</strain>
    </source>
</reference>